<reference key="1">
    <citation type="submission" date="2006-04" db="EMBL/GenBank/DDBJ databases">
        <authorList>
            <person name="Snow B.E."/>
            <person name="Harrington L."/>
        </authorList>
    </citation>
    <scope>NUCLEOTIDE SEQUENCE [MRNA]</scope>
    <source>
        <strain>Sprague-Dawley</strain>
        <tissue>Spleen</tissue>
    </source>
</reference>
<organism>
    <name type="scientific">Rattus norvegicus</name>
    <name type="common">Rat</name>
    <dbReference type="NCBI Taxonomy" id="10116"/>
    <lineage>
        <taxon>Eukaryota</taxon>
        <taxon>Metazoa</taxon>
        <taxon>Chordata</taxon>
        <taxon>Craniata</taxon>
        <taxon>Vertebrata</taxon>
        <taxon>Euteleostomi</taxon>
        <taxon>Mammalia</taxon>
        <taxon>Eutheria</taxon>
        <taxon>Euarchontoglires</taxon>
        <taxon>Glires</taxon>
        <taxon>Rodentia</taxon>
        <taxon>Myomorpha</taxon>
        <taxon>Muroidea</taxon>
        <taxon>Muridae</taxon>
        <taxon>Murinae</taxon>
        <taxon>Rattus</taxon>
    </lineage>
</organism>
<dbReference type="EC" id="5.6.2.3" evidence="3"/>
<dbReference type="EMBL" id="DQ489562">
    <property type="protein sequence ID" value="ABF29535.1"/>
    <property type="molecule type" value="mRNA"/>
</dbReference>
<dbReference type="RefSeq" id="NP_001037718.1">
    <property type="nucleotide sequence ID" value="NM_001044253.1"/>
</dbReference>
<dbReference type="RefSeq" id="XP_063122012.1">
    <property type="nucleotide sequence ID" value="XM_063265942.1"/>
</dbReference>
<dbReference type="SMR" id="Q1HG60"/>
<dbReference type="FunCoup" id="Q1HG60">
    <property type="interactions" value="828"/>
</dbReference>
<dbReference type="STRING" id="10116.ENSRNOP00000021265"/>
<dbReference type="CarbonylDB" id="Q1HG60"/>
<dbReference type="PhosphoSitePlus" id="Q1HG60"/>
<dbReference type="PaxDb" id="10116-ENSRNOP00000021265"/>
<dbReference type="Ensembl" id="ENSRNOT00000021265.6">
    <property type="protein sequence ID" value="ENSRNOP00000021265.5"/>
    <property type="gene ID" value="ENSRNOG00000015878.6"/>
</dbReference>
<dbReference type="GeneID" id="367645"/>
<dbReference type="KEGG" id="rno:367645"/>
<dbReference type="UCSC" id="RGD:1586053">
    <property type="organism name" value="rat"/>
</dbReference>
<dbReference type="AGR" id="RGD:1586053"/>
<dbReference type="CTD" id="80119"/>
<dbReference type="RGD" id="1586053">
    <property type="gene designation" value="Pif1"/>
</dbReference>
<dbReference type="eggNOG" id="KOG0987">
    <property type="taxonomic scope" value="Eukaryota"/>
</dbReference>
<dbReference type="GeneTree" id="ENSGT00530000063561"/>
<dbReference type="HOGENOM" id="CLU_001613_7_1_1"/>
<dbReference type="InParanoid" id="Q1HG60"/>
<dbReference type="OMA" id="SSAWESC"/>
<dbReference type="PhylomeDB" id="Q1HG60"/>
<dbReference type="Reactome" id="R-RNO-171319">
    <property type="pathway name" value="Telomere Extension By Telomerase"/>
</dbReference>
<dbReference type="PRO" id="PR:Q1HG60"/>
<dbReference type="Proteomes" id="UP000002494">
    <property type="component" value="Chromosome 8"/>
</dbReference>
<dbReference type="Bgee" id="ENSRNOG00000015878">
    <property type="expression patterns" value="Expressed in thymus and 12 other cell types or tissues"/>
</dbReference>
<dbReference type="GO" id="GO:0000781">
    <property type="term" value="C:chromosome, telomeric region"/>
    <property type="evidence" value="ECO:0000266"/>
    <property type="project" value="RGD"/>
</dbReference>
<dbReference type="GO" id="GO:0005739">
    <property type="term" value="C:mitochondrion"/>
    <property type="evidence" value="ECO:0007669"/>
    <property type="project" value="UniProtKB-SubCell"/>
</dbReference>
<dbReference type="GO" id="GO:0005634">
    <property type="term" value="C:nucleus"/>
    <property type="evidence" value="ECO:0000266"/>
    <property type="project" value="RGD"/>
</dbReference>
<dbReference type="GO" id="GO:0043139">
    <property type="term" value="F:5'-3' DNA helicase activity"/>
    <property type="evidence" value="ECO:0000266"/>
    <property type="project" value="RGD"/>
</dbReference>
<dbReference type="GO" id="GO:0033678">
    <property type="term" value="F:5'-3' DNA/RNA helicase activity"/>
    <property type="evidence" value="ECO:0000266"/>
    <property type="project" value="RGD"/>
</dbReference>
<dbReference type="GO" id="GO:0005524">
    <property type="term" value="F:ATP binding"/>
    <property type="evidence" value="ECO:0000266"/>
    <property type="project" value="RGD"/>
</dbReference>
<dbReference type="GO" id="GO:0016887">
    <property type="term" value="F:ATP hydrolysis activity"/>
    <property type="evidence" value="ECO:0007669"/>
    <property type="project" value="RHEA"/>
</dbReference>
<dbReference type="GO" id="GO:0051880">
    <property type="term" value="F:G-quadruplex DNA binding"/>
    <property type="evidence" value="ECO:0007669"/>
    <property type="project" value="UniProtKB-UniRule"/>
</dbReference>
<dbReference type="GO" id="GO:0000287">
    <property type="term" value="F:magnesium ion binding"/>
    <property type="evidence" value="ECO:0000266"/>
    <property type="project" value="RGD"/>
</dbReference>
<dbReference type="GO" id="GO:0017116">
    <property type="term" value="F:single-stranded DNA helicase activity"/>
    <property type="evidence" value="ECO:0000266"/>
    <property type="project" value="RGD"/>
</dbReference>
<dbReference type="GO" id="GO:0010521">
    <property type="term" value="F:telomerase inhibitor activity"/>
    <property type="evidence" value="ECO:0007669"/>
    <property type="project" value="UniProtKB-UniRule"/>
</dbReference>
<dbReference type="GO" id="GO:0042162">
    <property type="term" value="F:telomeric DNA binding"/>
    <property type="evidence" value="ECO:0000266"/>
    <property type="project" value="RGD"/>
</dbReference>
<dbReference type="GO" id="GO:0006310">
    <property type="term" value="P:DNA recombination"/>
    <property type="evidence" value="ECO:0007669"/>
    <property type="project" value="UniProtKB-UniRule"/>
</dbReference>
<dbReference type="GO" id="GO:0006281">
    <property type="term" value="P:DNA repair"/>
    <property type="evidence" value="ECO:0007669"/>
    <property type="project" value="UniProtKB-UniRule"/>
</dbReference>
<dbReference type="GO" id="GO:0000002">
    <property type="term" value="P:mitochondrial genome maintenance"/>
    <property type="evidence" value="ECO:0007669"/>
    <property type="project" value="UniProtKB-UniRule"/>
</dbReference>
<dbReference type="GO" id="GO:0032211">
    <property type="term" value="P:negative regulation of telomere maintenance via telomerase"/>
    <property type="evidence" value="ECO:0000266"/>
    <property type="project" value="RGD"/>
</dbReference>
<dbReference type="GO" id="GO:0001117">
    <property type="term" value="P:protein-DNA-RNA complex disassembly"/>
    <property type="evidence" value="ECO:0000266"/>
    <property type="project" value="RGD"/>
</dbReference>
<dbReference type="GO" id="GO:0000723">
    <property type="term" value="P:telomere maintenance"/>
    <property type="evidence" value="ECO:0007669"/>
    <property type="project" value="InterPro"/>
</dbReference>
<dbReference type="CDD" id="cd18037">
    <property type="entry name" value="DEXSc_Pif1_like"/>
    <property type="match status" value="1"/>
</dbReference>
<dbReference type="CDD" id="cd18809">
    <property type="entry name" value="SF1_C_RecD"/>
    <property type="match status" value="1"/>
</dbReference>
<dbReference type="FunFam" id="3.40.50.300:FF:000805">
    <property type="entry name" value="ATP-dependent DNA helicase PIF1"/>
    <property type="match status" value="1"/>
</dbReference>
<dbReference type="FunFam" id="3.40.50.300:FF:003367">
    <property type="entry name" value="ATP-dependent DNA helicase PIF1"/>
    <property type="match status" value="1"/>
</dbReference>
<dbReference type="Gene3D" id="3.40.50.300">
    <property type="entry name" value="P-loop containing nucleotide triphosphate hydrolases"/>
    <property type="match status" value="2"/>
</dbReference>
<dbReference type="HAMAP" id="MF_03176">
    <property type="entry name" value="PIF1"/>
    <property type="match status" value="1"/>
</dbReference>
<dbReference type="InterPro" id="IPR010285">
    <property type="entry name" value="DNA_helicase_pif1-like_DEAD"/>
</dbReference>
<dbReference type="InterPro" id="IPR027417">
    <property type="entry name" value="P-loop_NTPase"/>
</dbReference>
<dbReference type="InterPro" id="IPR049163">
    <property type="entry name" value="Pif1-like_2B_dom"/>
</dbReference>
<dbReference type="InterPro" id="IPR051055">
    <property type="entry name" value="PIF1_helicase"/>
</dbReference>
<dbReference type="InterPro" id="IPR048293">
    <property type="entry name" value="PIF1_RRM3_pfh1"/>
</dbReference>
<dbReference type="PANTHER" id="PTHR47642">
    <property type="entry name" value="ATP-DEPENDENT DNA HELICASE"/>
    <property type="match status" value="1"/>
</dbReference>
<dbReference type="PANTHER" id="PTHR47642:SF7">
    <property type="entry name" value="ATP-DEPENDENT DNA HELICASE PIF1"/>
    <property type="match status" value="1"/>
</dbReference>
<dbReference type="Pfam" id="PF25344">
    <property type="entry name" value="PH_LRR1"/>
    <property type="match status" value="1"/>
</dbReference>
<dbReference type="Pfam" id="PF05970">
    <property type="entry name" value="PIF1"/>
    <property type="match status" value="1"/>
</dbReference>
<dbReference type="Pfam" id="PF21530">
    <property type="entry name" value="Pif1_2B_dom"/>
    <property type="match status" value="1"/>
</dbReference>
<dbReference type="SUPFAM" id="SSF52540">
    <property type="entry name" value="P-loop containing nucleoside triphosphate hydrolases"/>
    <property type="match status" value="2"/>
</dbReference>
<name>PIF1_RAT</name>
<feature type="chain" id="PRO_0000295092" description="ATP-dependent DNA helicase PIF1">
    <location>
        <begin position="1"/>
        <end position="637"/>
    </location>
</feature>
<feature type="DNA-binding region" evidence="3">
    <location>
        <begin position="573"/>
        <end position="592"/>
    </location>
</feature>
<feature type="region of interest" description="PINT" evidence="1">
    <location>
        <begin position="1"/>
        <end position="180"/>
    </location>
</feature>
<feature type="region of interest" description="Disordered" evidence="4">
    <location>
        <begin position="159"/>
        <end position="184"/>
    </location>
</feature>
<feature type="region of interest" description="Disordered" evidence="4">
    <location>
        <begin position="618"/>
        <end position="637"/>
    </location>
</feature>
<feature type="compositionally biased region" description="Acidic residues" evidence="4">
    <location>
        <begin position="620"/>
        <end position="637"/>
    </location>
</feature>
<feature type="binding site" evidence="3">
    <location>
        <begin position="224"/>
        <end position="231"/>
    </location>
    <ligand>
        <name>ATP</name>
        <dbReference type="ChEBI" id="CHEBI:30616"/>
    </ligand>
</feature>
<feature type="modified residue" description="Phosphoserine" evidence="2">
    <location>
        <position position="27"/>
    </location>
</feature>
<feature type="modified residue" description="Phosphoserine" evidence="2">
    <location>
        <position position="151"/>
    </location>
</feature>
<proteinExistence type="evidence at transcript level"/>
<evidence type="ECO:0000250" key="1"/>
<evidence type="ECO:0000250" key="2">
    <source>
        <dbReference type="UniProtKB" id="Q9H611"/>
    </source>
</evidence>
<evidence type="ECO:0000255" key="3">
    <source>
        <dbReference type="HAMAP-Rule" id="MF_03176"/>
    </source>
</evidence>
<evidence type="ECO:0000256" key="4">
    <source>
        <dbReference type="SAM" id="MobiDB-lite"/>
    </source>
</evidence>
<accession>Q1HG60</accession>
<gene>
    <name type="primary">Pif1</name>
</gene>
<keyword id="KW-0067">ATP-binding</keyword>
<keyword id="KW-0227">DNA damage</keyword>
<keyword id="KW-0233">DNA recombination</keyword>
<keyword id="KW-0234">DNA repair</keyword>
<keyword id="KW-0238">DNA-binding</keyword>
<keyword id="KW-0347">Helicase</keyword>
<keyword id="KW-0378">Hydrolase</keyword>
<keyword id="KW-0413">Isomerase</keyword>
<keyword id="KW-0496">Mitochondrion</keyword>
<keyword id="KW-0547">Nucleotide-binding</keyword>
<keyword id="KW-0539">Nucleus</keyword>
<keyword id="KW-0597">Phosphoprotein</keyword>
<keyword id="KW-1185">Reference proteome</keyword>
<sequence>MPSSTEVATDECDDTELRCRVAVEELSPGGQPRKRQALRAAELSLGRNERRELMLRLQAPGPEGRPRCFPLRAVRLFTRFAAVGRSTLRLPADGVPRAGSVQLLLSDCPPERLRRFLRTLRLKLAVAPGPGPASARAQLLGPRPRDFVTISPVQPEELRRAAATKAPDSALEKRPMESQPSMEAPRWPLPVKKLRMPSSKPKLSEEQAAVLRMVLKGQSIFFTGSAGTGKSYLLKHILGSLPPTGTVATASTGVAACHIGGTTLHAFAGIGSGQAPLAQCVALAHRPGVRQGWLNCQRLVIDEISMVEADFFDKLEAVARAVRQQKKPFGGIQLIICGDFLQLPPVTKGSQHPRFCFQAKSWRKCVPVTLELTEVWRQADQTFISLLKAVRLGRCSDEVTRQLRATAAHKVGRDGIIATRLCTHQDDVALTNEKRLKELPGDVHSFEAIDSDPELSRTLDAQCPVGRVLQLKLGAQVMLVKNLAVSRGLVNGARGVVVGFESEGRGLPRVRFLCGITEVIRTDRWTVQVTGGQYLSRQQLPLQLAWAMSIHKSQGMSLDCVEISLGRVFASGQAYVALSRARSLQGLRVLDFDPTVVRCDSRVLQFYATLRQGRGLSLESQDDEEASSDLENMDPNL</sequence>
<protein>
    <recommendedName>
        <fullName evidence="3">ATP-dependent DNA helicase PIF1</fullName>
        <ecNumber evidence="3">5.6.2.3</ecNumber>
    </recommendedName>
    <alternativeName>
        <fullName evidence="3">DNA 5'-3' helicase PIF1</fullName>
    </alternativeName>
    <alternativeName>
        <fullName evidence="3">DNA repair and recombination helicase PIF1</fullName>
    </alternativeName>
    <alternativeName>
        <fullName>PIF1/RRM3 DNA helicase-like protein</fullName>
    </alternativeName>
</protein>
<comment type="function">
    <text evidence="3">DNA-dependent ATPase and 5'-3' DNA helicase required for the maintenance of both mitochondrial and nuclear genome stability. Efficiently unwinds G-quadruplex (G4) DNA structures and forked RNA-DNA hybrids. Resolves G4 structures, preventing replication pausing and double-strand breaks (DSBs) at G4 motifs. Involved in the maintenance of telomeric DNA. Inhibits telomere elongation, de novo telomere formation and telomere addition to DSBs via catalytic inhibition of telomerase. Reduces the processivity of telomerase by displacing active telomerase from DNA ends. Releases telomerase by unwinding the short telomerase RNA/telomeric DNA hybrid that is the intermediate in the telomerase reaction. Possesses an intrinsic strand annealing activity.</text>
</comment>
<comment type="catalytic activity">
    <reaction evidence="3">
        <text>Couples ATP hydrolysis with the unwinding of duplex DNA at the replication fork by translocating in the 5'-3' direction. This creates two antiparallel DNA single strands (ssDNA). The leading ssDNA polymer is the template for DNA polymerase III holoenzyme which synthesizes a continuous strand.</text>
        <dbReference type="EC" id="5.6.2.3"/>
    </reaction>
</comment>
<comment type="catalytic activity">
    <reaction evidence="3">
        <text>ATP + H2O = ADP + phosphate + H(+)</text>
        <dbReference type="Rhea" id="RHEA:13065"/>
        <dbReference type="ChEBI" id="CHEBI:15377"/>
        <dbReference type="ChEBI" id="CHEBI:15378"/>
        <dbReference type="ChEBI" id="CHEBI:30616"/>
        <dbReference type="ChEBI" id="CHEBI:43474"/>
        <dbReference type="ChEBI" id="CHEBI:456216"/>
        <dbReference type="EC" id="5.6.2.3"/>
    </reaction>
</comment>
<comment type="cofactor">
    <cofactor evidence="3">
        <name>Mg(2+)</name>
        <dbReference type="ChEBI" id="CHEBI:18420"/>
    </cofactor>
</comment>
<comment type="subunit">
    <text evidence="3">Monomer. Interacts with telomerase.</text>
</comment>
<comment type="subcellular location">
    <subcellularLocation>
        <location evidence="3">Nucleus</location>
    </subcellularLocation>
    <subcellularLocation>
        <location evidence="3">Mitochondrion</location>
    </subcellularLocation>
</comment>
<comment type="domain">
    <text evidence="1">The PIF1 N-terminal (PINT) domain enhances the interaction with ssDNA through intrinsic binding activity, it also harbors DNA strand-annealing activity.</text>
</comment>
<comment type="similarity">
    <text evidence="3">Belongs to the helicase family. PIF1 subfamily.</text>
</comment>